<feature type="chain" id="PRO_0000235543" description="Aspartate--tRNA(Asp/Asn) ligase">
    <location>
        <begin position="1"/>
        <end position="606"/>
    </location>
</feature>
<feature type="region of interest" description="Aspartate" evidence="1">
    <location>
        <begin position="201"/>
        <end position="204"/>
    </location>
</feature>
<feature type="binding site" evidence="1">
    <location>
        <position position="177"/>
    </location>
    <ligand>
        <name>L-aspartate</name>
        <dbReference type="ChEBI" id="CHEBI:29991"/>
    </ligand>
</feature>
<feature type="binding site" evidence="1">
    <location>
        <begin position="223"/>
        <end position="225"/>
    </location>
    <ligand>
        <name>ATP</name>
        <dbReference type="ChEBI" id="CHEBI:30616"/>
    </ligand>
</feature>
<feature type="binding site" evidence="1">
    <location>
        <position position="223"/>
    </location>
    <ligand>
        <name>L-aspartate</name>
        <dbReference type="ChEBI" id="CHEBI:29991"/>
    </ligand>
</feature>
<feature type="binding site" evidence="1">
    <location>
        <position position="232"/>
    </location>
    <ligand>
        <name>ATP</name>
        <dbReference type="ChEBI" id="CHEBI:30616"/>
    </ligand>
</feature>
<feature type="binding site" evidence="1">
    <location>
        <position position="461"/>
    </location>
    <ligand>
        <name>L-aspartate</name>
        <dbReference type="ChEBI" id="CHEBI:29991"/>
    </ligand>
</feature>
<feature type="binding site" evidence="1">
    <location>
        <position position="499"/>
    </location>
    <ligand>
        <name>ATP</name>
        <dbReference type="ChEBI" id="CHEBI:30616"/>
    </ligand>
</feature>
<feature type="binding site" evidence="1">
    <location>
        <position position="506"/>
    </location>
    <ligand>
        <name>L-aspartate</name>
        <dbReference type="ChEBI" id="CHEBI:29991"/>
    </ligand>
</feature>
<feature type="binding site" evidence="1">
    <location>
        <begin position="551"/>
        <end position="554"/>
    </location>
    <ligand>
        <name>ATP</name>
        <dbReference type="ChEBI" id="CHEBI:30616"/>
    </ligand>
</feature>
<feature type="site" description="Important for tRNA non-discrimination" evidence="1">
    <location>
        <position position="30"/>
    </location>
</feature>
<gene>
    <name evidence="1" type="primary">aspS</name>
    <name type="ordered locus">PMN2A_1290</name>
</gene>
<sequence>MRNKTCGELRASAISANVQLCGWVDRRRDHGGVIFIDLRDRSGTIQITVDPDQGQDLFSIAESLRNETVLQINGLVRARPDEAINTKIPTGEVEVLAKNIKILNTVTSTLPFSVSIHDEESVKEEIRLKHRYLDLRRERMNNNLRLRHNTVKAARSFLENEGFIEVETPILTRSTPEGARDYLVPSRVCGGEFFALPQSPQLFKQLLMVGGVERYYQVARCFRDEDLRADRQPEFTQLDIEMSFMEEKEIIELNEKLIVSIWKKIKGIDLQTPFPRMTWQEAMDRFGTDRPDTRYGMELVNTSDLFSKSGFKVFSNAISSGGCVKCITIEDGNNLISNVRIKPGGDIFSEAQKAGAGGLAFIRVRDDKEVDTIGAIKDNLTTSQIKELLLKTQAKPGDLILFGAGPTNIVNRTLDRVRQFIAKDLKIISDNELKTQWNFLWVTDFPMFEFNSDENRLEAIHHPFCAPKPEDIGESESLWKDKLPNSNAQAYDLVLNGLEIGGGSLRIHNSELQKTVLEVIGLSKNEAEEQFGFLIDALAMGAPPHGGIAFGLDRIVMLLANEDSIRDTIAFPKTQQARCSMAKAPANVENKQLEDLHIASTWIDPD</sequence>
<accession>Q46I98</accession>
<name>SYDND_PROMT</name>
<reference key="1">
    <citation type="journal article" date="2007" name="PLoS Genet.">
        <title>Patterns and implications of gene gain and loss in the evolution of Prochlorococcus.</title>
        <authorList>
            <person name="Kettler G.C."/>
            <person name="Martiny A.C."/>
            <person name="Huang K."/>
            <person name="Zucker J."/>
            <person name="Coleman M.L."/>
            <person name="Rodrigue S."/>
            <person name="Chen F."/>
            <person name="Lapidus A."/>
            <person name="Ferriera S."/>
            <person name="Johnson J."/>
            <person name="Steglich C."/>
            <person name="Church G.M."/>
            <person name="Richardson P."/>
            <person name="Chisholm S.W."/>
        </authorList>
    </citation>
    <scope>NUCLEOTIDE SEQUENCE [LARGE SCALE GENOMIC DNA]</scope>
    <source>
        <strain>NATL2A</strain>
    </source>
</reference>
<evidence type="ECO:0000255" key="1">
    <source>
        <dbReference type="HAMAP-Rule" id="MF_00044"/>
    </source>
</evidence>
<evidence type="ECO:0000305" key="2"/>
<keyword id="KW-0030">Aminoacyl-tRNA synthetase</keyword>
<keyword id="KW-0067">ATP-binding</keyword>
<keyword id="KW-0963">Cytoplasm</keyword>
<keyword id="KW-0436">Ligase</keyword>
<keyword id="KW-0547">Nucleotide-binding</keyword>
<keyword id="KW-0648">Protein biosynthesis</keyword>
<keyword id="KW-1185">Reference proteome</keyword>
<comment type="function">
    <text evidence="1">Aspartyl-tRNA synthetase with relaxed tRNA specificity since it is able to aspartylate not only its cognate tRNA(Asp) but also tRNA(Asn). Reaction proceeds in two steps: L-aspartate is first activated by ATP to form Asp-AMP and then transferred to the acceptor end of tRNA(Asp/Asn).</text>
</comment>
<comment type="catalytic activity">
    <reaction evidence="1">
        <text>tRNA(Asx) + L-aspartate + ATP = L-aspartyl-tRNA(Asx) + AMP + diphosphate</text>
        <dbReference type="Rhea" id="RHEA:18349"/>
        <dbReference type="Rhea" id="RHEA-COMP:9710"/>
        <dbReference type="Rhea" id="RHEA-COMP:9711"/>
        <dbReference type="ChEBI" id="CHEBI:29991"/>
        <dbReference type="ChEBI" id="CHEBI:30616"/>
        <dbReference type="ChEBI" id="CHEBI:33019"/>
        <dbReference type="ChEBI" id="CHEBI:78442"/>
        <dbReference type="ChEBI" id="CHEBI:78516"/>
        <dbReference type="ChEBI" id="CHEBI:456215"/>
        <dbReference type="EC" id="6.1.1.23"/>
    </reaction>
</comment>
<comment type="subunit">
    <text evidence="1">Homodimer.</text>
</comment>
<comment type="subcellular location">
    <subcellularLocation>
        <location evidence="1">Cytoplasm</location>
    </subcellularLocation>
</comment>
<comment type="similarity">
    <text evidence="1">Belongs to the class-II aminoacyl-tRNA synthetase family. Type 1 subfamily.</text>
</comment>
<comment type="sequence caution" evidence="2">
    <conflict type="erroneous initiation">
        <sequence resource="EMBL-CDS" id="AAZ58780"/>
    </conflict>
</comment>
<organism>
    <name type="scientific">Prochlorococcus marinus (strain NATL2A)</name>
    <dbReference type="NCBI Taxonomy" id="59920"/>
    <lineage>
        <taxon>Bacteria</taxon>
        <taxon>Bacillati</taxon>
        <taxon>Cyanobacteriota</taxon>
        <taxon>Cyanophyceae</taxon>
        <taxon>Synechococcales</taxon>
        <taxon>Prochlorococcaceae</taxon>
        <taxon>Prochlorococcus</taxon>
    </lineage>
</organism>
<protein>
    <recommendedName>
        <fullName evidence="1">Aspartate--tRNA(Asp/Asn) ligase</fullName>
        <ecNumber evidence="1">6.1.1.23</ecNumber>
    </recommendedName>
    <alternativeName>
        <fullName evidence="1">Aspartyl-tRNA synthetase</fullName>
        <shortName evidence="1">AspRS</shortName>
    </alternativeName>
    <alternativeName>
        <fullName evidence="1">Non-discriminating aspartyl-tRNA synthetase</fullName>
        <shortName evidence="1">ND-AspRS</shortName>
    </alternativeName>
</protein>
<dbReference type="EC" id="6.1.1.23" evidence="1"/>
<dbReference type="EMBL" id="CP000095">
    <property type="protein sequence ID" value="AAZ58780.1"/>
    <property type="status" value="ALT_INIT"/>
    <property type="molecule type" value="Genomic_DNA"/>
</dbReference>
<dbReference type="RefSeq" id="WP_041711090.1">
    <property type="nucleotide sequence ID" value="NC_007335.2"/>
</dbReference>
<dbReference type="SMR" id="Q46I98"/>
<dbReference type="STRING" id="59920.PMN2A_1290"/>
<dbReference type="KEGG" id="pmn:PMN2A_1290"/>
<dbReference type="HOGENOM" id="CLU_014330_3_2_3"/>
<dbReference type="PhylomeDB" id="Q46I98"/>
<dbReference type="Proteomes" id="UP000002535">
    <property type="component" value="Chromosome"/>
</dbReference>
<dbReference type="GO" id="GO:0005737">
    <property type="term" value="C:cytoplasm"/>
    <property type="evidence" value="ECO:0007669"/>
    <property type="project" value="UniProtKB-SubCell"/>
</dbReference>
<dbReference type="GO" id="GO:0004815">
    <property type="term" value="F:aspartate-tRNA ligase activity"/>
    <property type="evidence" value="ECO:0007669"/>
    <property type="project" value="UniProtKB-UniRule"/>
</dbReference>
<dbReference type="GO" id="GO:0050560">
    <property type="term" value="F:aspartate-tRNA(Asn) ligase activity"/>
    <property type="evidence" value="ECO:0007669"/>
    <property type="project" value="UniProtKB-EC"/>
</dbReference>
<dbReference type="GO" id="GO:0005524">
    <property type="term" value="F:ATP binding"/>
    <property type="evidence" value="ECO:0007669"/>
    <property type="project" value="UniProtKB-UniRule"/>
</dbReference>
<dbReference type="GO" id="GO:0003676">
    <property type="term" value="F:nucleic acid binding"/>
    <property type="evidence" value="ECO:0007669"/>
    <property type="project" value="InterPro"/>
</dbReference>
<dbReference type="GO" id="GO:0006422">
    <property type="term" value="P:aspartyl-tRNA aminoacylation"/>
    <property type="evidence" value="ECO:0007669"/>
    <property type="project" value="UniProtKB-UniRule"/>
</dbReference>
<dbReference type="CDD" id="cd00777">
    <property type="entry name" value="AspRS_core"/>
    <property type="match status" value="1"/>
</dbReference>
<dbReference type="CDD" id="cd04317">
    <property type="entry name" value="EcAspRS_like_N"/>
    <property type="match status" value="1"/>
</dbReference>
<dbReference type="Gene3D" id="3.30.930.10">
    <property type="entry name" value="Bira Bifunctional Protein, Domain 2"/>
    <property type="match status" value="1"/>
</dbReference>
<dbReference type="Gene3D" id="3.30.1360.30">
    <property type="entry name" value="GAD-like domain"/>
    <property type="match status" value="1"/>
</dbReference>
<dbReference type="Gene3D" id="2.40.50.140">
    <property type="entry name" value="Nucleic acid-binding proteins"/>
    <property type="match status" value="1"/>
</dbReference>
<dbReference type="HAMAP" id="MF_00044">
    <property type="entry name" value="Asp_tRNA_synth_type1"/>
    <property type="match status" value="1"/>
</dbReference>
<dbReference type="InterPro" id="IPR004364">
    <property type="entry name" value="Aa-tRNA-synt_II"/>
</dbReference>
<dbReference type="InterPro" id="IPR006195">
    <property type="entry name" value="aa-tRNA-synth_II"/>
</dbReference>
<dbReference type="InterPro" id="IPR045864">
    <property type="entry name" value="aa-tRNA-synth_II/BPL/LPL"/>
</dbReference>
<dbReference type="InterPro" id="IPR004524">
    <property type="entry name" value="Asp-tRNA-ligase_1"/>
</dbReference>
<dbReference type="InterPro" id="IPR047089">
    <property type="entry name" value="Asp-tRNA-ligase_1_N"/>
</dbReference>
<dbReference type="InterPro" id="IPR002312">
    <property type="entry name" value="Asp/Asn-tRNA-synth_IIb"/>
</dbReference>
<dbReference type="InterPro" id="IPR047090">
    <property type="entry name" value="AspRS_core"/>
</dbReference>
<dbReference type="InterPro" id="IPR004115">
    <property type="entry name" value="GAD-like_sf"/>
</dbReference>
<dbReference type="InterPro" id="IPR029351">
    <property type="entry name" value="GAD_dom"/>
</dbReference>
<dbReference type="InterPro" id="IPR012340">
    <property type="entry name" value="NA-bd_OB-fold"/>
</dbReference>
<dbReference type="InterPro" id="IPR004365">
    <property type="entry name" value="NA-bd_OB_tRNA"/>
</dbReference>
<dbReference type="NCBIfam" id="TIGR00459">
    <property type="entry name" value="aspS_bact"/>
    <property type="match status" value="1"/>
</dbReference>
<dbReference type="NCBIfam" id="NF001750">
    <property type="entry name" value="PRK00476.1"/>
    <property type="match status" value="1"/>
</dbReference>
<dbReference type="PANTHER" id="PTHR22594:SF5">
    <property type="entry name" value="ASPARTATE--TRNA LIGASE, MITOCHONDRIAL"/>
    <property type="match status" value="1"/>
</dbReference>
<dbReference type="PANTHER" id="PTHR22594">
    <property type="entry name" value="ASPARTYL/LYSYL-TRNA SYNTHETASE"/>
    <property type="match status" value="1"/>
</dbReference>
<dbReference type="Pfam" id="PF02938">
    <property type="entry name" value="GAD"/>
    <property type="match status" value="1"/>
</dbReference>
<dbReference type="Pfam" id="PF00152">
    <property type="entry name" value="tRNA-synt_2"/>
    <property type="match status" value="1"/>
</dbReference>
<dbReference type="Pfam" id="PF01336">
    <property type="entry name" value="tRNA_anti-codon"/>
    <property type="match status" value="1"/>
</dbReference>
<dbReference type="PRINTS" id="PR01042">
    <property type="entry name" value="TRNASYNTHASP"/>
</dbReference>
<dbReference type="SUPFAM" id="SSF55681">
    <property type="entry name" value="Class II aaRS and biotin synthetases"/>
    <property type="match status" value="1"/>
</dbReference>
<dbReference type="SUPFAM" id="SSF55261">
    <property type="entry name" value="GAD domain-like"/>
    <property type="match status" value="1"/>
</dbReference>
<dbReference type="SUPFAM" id="SSF50249">
    <property type="entry name" value="Nucleic acid-binding proteins"/>
    <property type="match status" value="1"/>
</dbReference>
<dbReference type="PROSITE" id="PS50862">
    <property type="entry name" value="AA_TRNA_LIGASE_II"/>
    <property type="match status" value="1"/>
</dbReference>
<proteinExistence type="inferred from homology"/>